<name>SHCH1_CAEEL</name>
<organism evidence="12">
    <name type="scientific">Caenorhabditis elegans</name>
    <dbReference type="NCBI Taxonomy" id="6239"/>
    <lineage>
        <taxon>Eukaryota</taxon>
        <taxon>Metazoa</taxon>
        <taxon>Ecdysozoa</taxon>
        <taxon>Nematoda</taxon>
        <taxon>Chromadorea</taxon>
        <taxon>Rhabditida</taxon>
        <taxon>Rhabditina</taxon>
        <taxon>Rhabditomorpha</taxon>
        <taxon>Rhabditoidea</taxon>
        <taxon>Rhabditidae</taxon>
        <taxon>Peloderinae</taxon>
        <taxon>Caenorhabditis</taxon>
    </lineage>
</organism>
<protein>
    <recommendedName>
        <fullName evidence="1">SHC-transforming protein homolog 1</fullName>
    </recommendedName>
    <alternativeName>
        <fullName evidence="11">Src homology 2 domain adapter homolog 1</fullName>
    </alternativeName>
</protein>
<gene>
    <name evidence="13" type="primary">shc-1</name>
    <name evidence="13" type="ORF">F54A5.3</name>
</gene>
<keyword id="KW-0025">Alternative splicing</keyword>
<keyword id="KW-1003">Cell membrane</keyword>
<keyword id="KW-0963">Cytoplasm</keyword>
<keyword id="KW-0472">Membrane</keyword>
<keyword id="KW-0539">Nucleus</keyword>
<keyword id="KW-1185">Reference proteome</keyword>
<keyword id="KW-0727">SH2 domain</keyword>
<keyword id="KW-0346">Stress response</keyword>
<accession>Q9TYT3</accession>
<accession>H2KZG0</accession>
<accession>H2KZG2</accession>
<reference evidence="12" key="1">
    <citation type="journal article" date="1998" name="Science">
        <title>Genome sequence of the nematode C. elegans: a platform for investigating biology.</title>
        <authorList>
            <consortium name="The C. elegans sequencing consortium"/>
        </authorList>
    </citation>
    <scope>NUCLEOTIDE SEQUENCE [LARGE SCALE GENOMIC DNA]</scope>
    <source>
        <strain evidence="12">Bristol N2</strain>
    </source>
</reference>
<reference evidence="11" key="2">
    <citation type="journal article" date="2008" name="Genes Dev.">
        <title>SHC-1/p52Shc targets the insulin/IGF-1 and JNK signaling pathways to modulate life span and stress response in C. elegans.</title>
        <authorList>
            <person name="Neumann-Haefelin E."/>
            <person name="Qi W."/>
            <person name="Finkbeiner E."/>
            <person name="Walz G."/>
            <person name="Baumeister R."/>
            <person name="Hertweck M."/>
        </authorList>
    </citation>
    <scope>FUNCTION</scope>
    <scope>INTERACTION WITH DAF-2 AND MEK-1</scope>
    <scope>SUBCELLULAR LOCATION</scope>
    <scope>TISSUE SPECIFICITY</scope>
</reference>
<reference evidence="11" key="3">
    <citation type="journal article" date="2008" name="Mol. Cell. Biol.">
        <title>Role of the Caenorhabditis elegans Shc adaptor protein in the c-Jun N-terminal kinase signaling pathway.</title>
        <authorList>
            <person name="Mizuno T."/>
            <person name="Fujiki K."/>
            <person name="Sasakawa A."/>
            <person name="Hisamoto N."/>
            <person name="Matsumoto K."/>
        </authorList>
    </citation>
    <scope>FUNCTION</scope>
    <scope>INTERACTION WITH MEK-1 AND MLK-1</scope>
    <scope>TISSUE SPECIFICITY</scope>
    <scope>MUTAGENESIS OF ARG-136 AND ARG-234</scope>
</reference>
<reference evidence="11" key="4">
    <citation type="journal article" date="2012" name="Nat. Commun.">
        <title>Endocannabinoid-Goalpha signalling inhibits axon regeneration in Caenorhabditis elegans by antagonizing Gqalpha-PKC-JNK signalling.</title>
        <authorList>
            <person name="Pastuhov S.I."/>
            <person name="Fujiki K."/>
            <person name="Nix P."/>
            <person name="Kanao S."/>
            <person name="Bastiani M."/>
            <person name="Matsumoto K."/>
            <person name="Hisamoto N."/>
        </authorList>
    </citation>
    <scope>FUNCTION</scope>
    <scope>INTERACTION WITH MLK-1</scope>
</reference>
<reference key="5">
    <citation type="journal article" date="2012" name="PLoS Genet.">
        <title>Cell-nonautonomous signaling of FOXO/DAF-16 to the stem cells of Caenorhabditis elegans.</title>
        <authorList>
            <person name="Qi W."/>
            <person name="Huang X."/>
            <person name="Neumann-Haefelin E."/>
            <person name="Schulze E."/>
            <person name="Baumeister R."/>
        </authorList>
    </citation>
    <scope>FUNCTION</scope>
</reference>
<reference key="6">
    <citation type="journal article" date="2014" name="Exp. Gerontol.">
        <title>Doxycyclin ameliorates a starvation-induced germline tumor in C. elegans daf-18/PTEN mutant background.</title>
        <authorList>
            <person name="Wolf T."/>
            <person name="Qi W."/>
            <person name="Schindler V."/>
            <person name="Runkel E.D."/>
            <person name="Baumeister R."/>
        </authorList>
    </citation>
    <scope>FUNCTION</scope>
</reference>
<reference key="7">
    <citation type="journal article" date="2016" name="PLoS Genet.">
        <title>The C. elegans discoidin domain receptor DDR-2 modulates the Met-like RTK-JNK signaling pathway in axon regeneration.</title>
        <authorList>
            <person name="Hisamoto N."/>
            <person name="Nagamori Y."/>
            <person name="Shimizu T."/>
            <person name="Pastuhov S.I."/>
            <person name="Matsumoto K."/>
        </authorList>
    </citation>
    <scope>FUNCTION</scope>
    <scope>INTERACTION WITH SVH-2 AND SVH-4</scope>
    <scope>MUTAGENESIS OF ARG-234</scope>
</reference>
<dbReference type="EMBL" id="BX284601">
    <property type="protein sequence ID" value="CCD68061.1"/>
    <property type="molecule type" value="Genomic_DNA"/>
</dbReference>
<dbReference type="EMBL" id="BX284601">
    <property type="protein sequence ID" value="CCD68062.2"/>
    <property type="molecule type" value="Genomic_DNA"/>
</dbReference>
<dbReference type="PIR" id="T33836">
    <property type="entry name" value="T33836"/>
</dbReference>
<dbReference type="RefSeq" id="NP_001379831.1">
    <molecule id="Q9TYT3-2"/>
    <property type="nucleotide sequence ID" value="NM_001392658.1"/>
</dbReference>
<dbReference type="RefSeq" id="NP_490799.2">
    <molecule id="Q9TYT3-1"/>
    <property type="nucleotide sequence ID" value="NM_058398.4"/>
</dbReference>
<dbReference type="RefSeq" id="NP_490800.2">
    <property type="nucleotide sequence ID" value="NM_058399.4"/>
</dbReference>
<dbReference type="SMR" id="Q9TYT3"/>
<dbReference type="DIP" id="DIP-25661N"/>
<dbReference type="FunCoup" id="Q9TYT3">
    <property type="interactions" value="1783"/>
</dbReference>
<dbReference type="IntAct" id="Q9TYT3">
    <property type="interactions" value="2"/>
</dbReference>
<dbReference type="STRING" id="6239.F54A5.3a.1"/>
<dbReference type="PaxDb" id="6239-F54A5.3a"/>
<dbReference type="PeptideAtlas" id="Q9TYT3"/>
<dbReference type="EnsemblMetazoa" id="F54A5.3a.1">
    <molecule id="Q9TYT3-1"/>
    <property type="protein sequence ID" value="F54A5.3a.1"/>
    <property type="gene ID" value="WBGene00018788"/>
</dbReference>
<dbReference type="EnsemblMetazoa" id="F54A5.3b.1">
    <molecule id="Q9TYT3-2"/>
    <property type="protein sequence ID" value="F54A5.3b.1"/>
    <property type="gene ID" value="WBGene00018788"/>
</dbReference>
<dbReference type="EnsemblMetazoa" id="F54A5.3b.2">
    <molecule id="Q9TYT3-2"/>
    <property type="protein sequence ID" value="F54A5.3b.2"/>
    <property type="gene ID" value="WBGene00018788"/>
</dbReference>
<dbReference type="EnsemblMetazoa" id="F54A5.3b.3">
    <molecule id="Q9TYT3-2"/>
    <property type="protein sequence ID" value="F54A5.3b.3"/>
    <property type="gene ID" value="WBGene00018788"/>
</dbReference>
<dbReference type="GeneID" id="3565745"/>
<dbReference type="KEGG" id="cel:CELE_F54A5.3"/>
<dbReference type="UCSC" id="F54A5.3a">
    <molecule id="Q9TYT3-1"/>
    <property type="organism name" value="c. elegans"/>
</dbReference>
<dbReference type="AGR" id="WB:WBGene00018788"/>
<dbReference type="CTD" id="3565745"/>
<dbReference type="WormBase" id="F54A5.3a">
    <molecule id="Q9TYT3-1"/>
    <property type="protein sequence ID" value="CE30804"/>
    <property type="gene ID" value="WBGene00018788"/>
    <property type="gene designation" value="shc-1"/>
</dbReference>
<dbReference type="WormBase" id="F54A5.3b">
    <molecule id="Q9TYT3-2"/>
    <property type="protein sequence ID" value="CE50617"/>
    <property type="gene ID" value="WBGene00018788"/>
    <property type="gene designation" value="shc-1"/>
</dbReference>
<dbReference type="eggNOG" id="KOG3697">
    <property type="taxonomic scope" value="Eukaryota"/>
</dbReference>
<dbReference type="GeneTree" id="ENSGT00950000182870"/>
<dbReference type="HOGENOM" id="CLU_861198_0_0_1"/>
<dbReference type="InParanoid" id="Q9TYT3"/>
<dbReference type="OMA" id="CHQLGIC"/>
<dbReference type="OrthoDB" id="9938362at2759"/>
<dbReference type="PhylomeDB" id="Q9TYT3"/>
<dbReference type="SignaLink" id="Q9TYT3"/>
<dbReference type="PRO" id="PR:Q9TYT3"/>
<dbReference type="Proteomes" id="UP000001940">
    <property type="component" value="Chromosome I"/>
</dbReference>
<dbReference type="Bgee" id="WBGene00018788">
    <property type="expression patterns" value="Expressed in pharyngeal muscle cell (C elegans) and 4 other cell types or tissues"/>
</dbReference>
<dbReference type="GO" id="GO:0005737">
    <property type="term" value="C:cytoplasm"/>
    <property type="evidence" value="ECO:0000314"/>
    <property type="project" value="WormBase"/>
</dbReference>
<dbReference type="GO" id="GO:0005634">
    <property type="term" value="C:nucleus"/>
    <property type="evidence" value="ECO:0000314"/>
    <property type="project" value="WormBase"/>
</dbReference>
<dbReference type="GO" id="GO:0005886">
    <property type="term" value="C:plasma membrane"/>
    <property type="evidence" value="ECO:0007669"/>
    <property type="project" value="UniProtKB-SubCell"/>
</dbReference>
<dbReference type="GO" id="GO:0005159">
    <property type="term" value="F:insulin-like growth factor receptor binding"/>
    <property type="evidence" value="ECO:0000353"/>
    <property type="project" value="WormBase"/>
</dbReference>
<dbReference type="GO" id="GO:0031434">
    <property type="term" value="F:mitogen-activated protein kinase kinase binding"/>
    <property type="evidence" value="ECO:0000353"/>
    <property type="project" value="WormBase"/>
</dbReference>
<dbReference type="GO" id="GO:0031435">
    <property type="term" value="F:mitogen-activated protein kinase kinase kinase binding"/>
    <property type="evidence" value="ECO:0000353"/>
    <property type="project" value="UniProtKB"/>
</dbReference>
<dbReference type="GO" id="GO:0048680">
    <property type="term" value="P:positive regulation of axon regeneration"/>
    <property type="evidence" value="ECO:0000315"/>
    <property type="project" value="UniProtKB"/>
</dbReference>
<dbReference type="GO" id="GO:0034976">
    <property type="term" value="P:response to endoplasmic reticulum stress"/>
    <property type="evidence" value="ECO:0000315"/>
    <property type="project" value="WormBase"/>
</dbReference>
<dbReference type="GO" id="GO:0010038">
    <property type="term" value="P:response to metal ion"/>
    <property type="evidence" value="ECO:0000315"/>
    <property type="project" value="WormBase"/>
</dbReference>
<dbReference type="CDD" id="cd00934">
    <property type="entry name" value="PTB"/>
    <property type="match status" value="1"/>
</dbReference>
<dbReference type="CDD" id="cd09925">
    <property type="entry name" value="SH2_SHC"/>
    <property type="match status" value="1"/>
</dbReference>
<dbReference type="FunFam" id="2.30.29.30:FF:000658">
    <property type="entry name" value="SHC-transforming protein homolog 1"/>
    <property type="match status" value="1"/>
</dbReference>
<dbReference type="FunFam" id="3.30.505.10:FF:000135">
    <property type="entry name" value="SHC-transforming protein homolog 1"/>
    <property type="match status" value="1"/>
</dbReference>
<dbReference type="Gene3D" id="2.30.29.30">
    <property type="entry name" value="Pleckstrin-homology domain (PH domain)/Phosphotyrosine-binding domain (PTB)"/>
    <property type="match status" value="1"/>
</dbReference>
<dbReference type="Gene3D" id="3.30.505.10">
    <property type="entry name" value="SH2 domain"/>
    <property type="match status" value="1"/>
</dbReference>
<dbReference type="InterPro" id="IPR011993">
    <property type="entry name" value="PH-like_dom_sf"/>
</dbReference>
<dbReference type="InterPro" id="IPR006020">
    <property type="entry name" value="PTB/PI_dom"/>
</dbReference>
<dbReference type="InterPro" id="IPR000980">
    <property type="entry name" value="SH2"/>
</dbReference>
<dbReference type="InterPro" id="IPR036860">
    <property type="entry name" value="SH2_dom_sf"/>
</dbReference>
<dbReference type="InterPro" id="IPR035676">
    <property type="entry name" value="SHC_SH2"/>
</dbReference>
<dbReference type="InterPro" id="IPR051184">
    <property type="entry name" value="Tyrosine-phos_adapter"/>
</dbReference>
<dbReference type="PANTHER" id="PTHR19969:SF5">
    <property type="entry name" value="CRK-LIKE PROTEIN"/>
    <property type="match status" value="1"/>
</dbReference>
<dbReference type="PANTHER" id="PTHR19969">
    <property type="entry name" value="SH2-SH3 ADAPTOR PROTEIN-RELATED"/>
    <property type="match status" value="1"/>
</dbReference>
<dbReference type="Pfam" id="PF00640">
    <property type="entry name" value="PID"/>
    <property type="match status" value="1"/>
</dbReference>
<dbReference type="Pfam" id="PF00017">
    <property type="entry name" value="SH2"/>
    <property type="match status" value="1"/>
</dbReference>
<dbReference type="PRINTS" id="PR00401">
    <property type="entry name" value="SH2DOMAIN"/>
</dbReference>
<dbReference type="SMART" id="SM00462">
    <property type="entry name" value="PTB"/>
    <property type="match status" value="1"/>
</dbReference>
<dbReference type="SMART" id="SM00252">
    <property type="entry name" value="SH2"/>
    <property type="match status" value="1"/>
</dbReference>
<dbReference type="SUPFAM" id="SSF50729">
    <property type="entry name" value="PH domain-like"/>
    <property type="match status" value="1"/>
</dbReference>
<dbReference type="SUPFAM" id="SSF55550">
    <property type="entry name" value="SH2 domain"/>
    <property type="match status" value="1"/>
</dbReference>
<dbReference type="PROSITE" id="PS01179">
    <property type="entry name" value="PID"/>
    <property type="match status" value="1"/>
</dbReference>
<dbReference type="PROSITE" id="PS50001">
    <property type="entry name" value="SH2"/>
    <property type="match status" value="1"/>
</dbReference>
<evidence type="ECO:0000250" key="1">
    <source>
        <dbReference type="UniProtKB" id="P29353"/>
    </source>
</evidence>
<evidence type="ECO:0000255" key="2">
    <source>
        <dbReference type="PROSITE-ProRule" id="PRU00148"/>
    </source>
</evidence>
<evidence type="ECO:0000255" key="3">
    <source>
        <dbReference type="PROSITE-ProRule" id="PRU00191"/>
    </source>
</evidence>
<evidence type="ECO:0000256" key="4">
    <source>
        <dbReference type="SAM" id="MobiDB-lite"/>
    </source>
</evidence>
<evidence type="ECO:0000269" key="5">
    <source>
    </source>
</evidence>
<evidence type="ECO:0000269" key="6">
    <source>
    </source>
</evidence>
<evidence type="ECO:0000269" key="7">
    <source>
    </source>
</evidence>
<evidence type="ECO:0000269" key="8">
    <source>
    </source>
</evidence>
<evidence type="ECO:0000269" key="9">
    <source>
    </source>
</evidence>
<evidence type="ECO:0000269" key="10">
    <source>
    </source>
</evidence>
<evidence type="ECO:0000305" key="11"/>
<evidence type="ECO:0000312" key="12">
    <source>
        <dbReference type="Proteomes" id="UP000001940"/>
    </source>
</evidence>
<evidence type="ECO:0000312" key="13">
    <source>
        <dbReference type="WormBase" id="F54A5.3a"/>
    </source>
</evidence>
<evidence type="ECO:0000312" key="14">
    <source>
        <dbReference type="WormBase" id="F54A5.3b"/>
    </source>
</evidence>
<feature type="chain" id="PRO_0000433512" description="SHC-transforming protein homolog 1" evidence="11">
    <location>
        <begin position="1"/>
        <end position="316"/>
    </location>
</feature>
<feature type="domain" description="PID" evidence="2">
    <location>
        <begin position="16"/>
        <end position="158"/>
    </location>
</feature>
<feature type="domain" description="SH2" evidence="3">
    <location>
        <begin position="211"/>
        <end position="307"/>
    </location>
</feature>
<feature type="region of interest" description="Disordered" evidence="4">
    <location>
        <begin position="292"/>
        <end position="316"/>
    </location>
</feature>
<feature type="site" description="Required for interaction with svh-2" evidence="10">
    <location>
        <position position="234"/>
    </location>
</feature>
<feature type="splice variant" id="VSP_061752" description="In isoform b." evidence="11">
    <location>
        <begin position="1"/>
        <end position="89"/>
    </location>
</feature>
<feature type="mutagenesis site" description="Partial sensitivity to Cu(2+). May prevent interaction with mlk-1 when phosphorylated at Tyr-209 which in turn may prevent the interaction between mlk-1 and mek-1. No effect on the association with mek-1. Severe sensitivity to Cu(2+) and no effect on the association with mek-1; when associated with K-234." evidence="5">
    <original>R</original>
    <variation>K</variation>
    <location>
        <position position="136"/>
    </location>
</feature>
<feature type="mutagenesis site" description="Weak sensitivity to Cu(2+). Severe sensitivity to Cu(2+) and no effect on the association with mek-1; when associated with K-136. Abolishes interaction with svh-2." evidence="5 10">
    <original>R</original>
    <variation>K</variation>
    <location>
        <position position="234"/>
    </location>
</feature>
<sequence>MLNVEPSFAEELRSSGVSLSATYLGSVPVVESINVMVSEMRVQVVSECIQHVAATVGVTAAREINPVVSRVIGEVKKENFPVDINISSKMIKIIKQSRLIQRHPFSFFSFGAQGQKGTDTELMFGYIAKNKDGTDRRCHVVFIEDVHKLIDVLTTAINVNTFDAQANASTSNDGFTVPAPPMRHRSSLHRQSFVSNCRAPTVTEDVVGKVWYHGNLSREDAQALLKTEGDFLVRQSDHTPGKYVLSGRTAENEHKHLILLDNHNRVRTRDRTFSNISELIDYHVNNGMAVRSEGRDRETSLNLIRPVPCPGSDDIE</sequence>
<proteinExistence type="evidence at protein level"/>
<comment type="function">
    <text evidence="5 6 7 8 9 10">Scaffold protein which plays an important role in the activation of the JNK pathway composed of mlk-1, mek-1 and kgb-1; by bringing together mek-1 and mlk-1, promotes mlk-1-mediated phosphorylation and activation of mek-1 which in turn phosphorylates kgb-1 (PubMed:18809575, PubMed:18832074, PubMed:22916022). In addition, negatively modulates the activation of the insulin/IGF-1-like signaling (IIS) probably by inhibiting the insulin receptor daf-2 (PubMed:18832074, PubMed:22916022). Positively regulates the activity of the transcription factor daf-16/FOXO by both inhibiting IIS and activating the JNK pathway (PubMed:18832074, PubMed:22916022). Plays a role in maintaining gonadal basement membrane integrity through activation of the JNK pathway components mek-1 and jnk-1 (PubMed:22916022). Involved in the response to several environmental stresses including heavy metal ions (Cu(2+) and Cd(2+)), heat, oxidative and protein misfolding (ER) stresses (PubMed:18809575, PubMed:18832074). Plays a role in gonad and germline development following the L1 diapause (PubMed:24746511). Plays a role in life span and egg laying (PubMed:18832074, PubMed:23072806). Plays a role in axon regeneration after injury (PubMed:23072806, PubMed:27984580).</text>
</comment>
<comment type="subunit">
    <text evidence="5 6 8 10">Interacts (via PID domain) with daf-2 (via cytoplasmic domain) (PubMed:18832074). Interacts with mek-1; the interaction is independent of mek-1 catalytic activity and is constitutive (PubMed:18809575, PubMed:18832074). Interacts (via N-terminus) with mlk-1 (via NPQY motif when phosphorylated on tyrosine residue) (PubMed:18809575, PubMed:23072806). Does not interact with jkk-1 or sek-1 (PubMed:18809575). Interacts (via SH2 domain) with svh-2 (PubMed:27984580). Interacts with svh-4 (PubMed:27984580).</text>
</comment>
<comment type="subcellular location">
    <subcellularLocation>
        <location evidence="6">Cytoplasm</location>
    </subcellularLocation>
    <subcellularLocation>
        <location evidence="6">Nucleus</location>
    </subcellularLocation>
    <subcellularLocation>
        <location evidence="6">Cell membrane</location>
        <topology evidence="6">Peripheral membrane protein</topology>
    </subcellularLocation>
    <text evidence="6">In intestinal cells, enriched in the nucleus.</text>
</comment>
<comment type="alternative products">
    <event type="alternative splicing"/>
    <isoform>
        <id>Q9TYT3-1</id>
        <name evidence="13">a</name>
        <sequence type="displayed"/>
    </isoform>
    <isoform>
        <id>Q9TYT3-2</id>
        <name evidence="14">b</name>
        <sequence type="described" ref="VSP_061752"/>
    </isoform>
</comment>
<comment type="tissue specificity">
    <text evidence="5 6">Expressed in hypodermis, intestine, head and tail neurons, pharynx, gonads, vulva and body muscles.</text>
</comment>